<gene>
    <name type="primary">MT-CYB</name>
    <name type="synonym">COB</name>
    <name type="synonym">CYTB</name>
    <name type="synonym">MTCYB</name>
</gene>
<reference key="1">
    <citation type="journal article" date="1999" name="Mol. Phylogenet. Evol.">
        <title>Cytochrome b phylogeny of the family bovidae: resolution within the alcelaphini, antilopini, neotragini, and tragelaphini.</title>
        <authorList>
            <person name="Matthee C.A."/>
            <person name="Robinson T.J."/>
        </authorList>
    </citation>
    <scope>NUCLEOTIDE SEQUENCE [GENOMIC DNA]</scope>
</reference>
<reference key="2">
    <citation type="submission" date="1997-11" db="EMBL/GenBank/DDBJ databases">
        <title>Variation in complete cytochrome b gene sequences of four antelope species.</title>
        <authorList>
            <person name="Lieckfeldt D."/>
            <person name="Pitra C."/>
        </authorList>
    </citation>
    <scope>NUCLEOTIDE SEQUENCE [GENOMIC DNA]</scope>
    <source>
        <strain>Isolate LHB2-97</strain>
    </source>
</reference>
<accession>O99257</accession>
<accession>O47419</accession>
<organism>
    <name type="scientific">Alcelaphus lichtensteinii</name>
    <name type="common">Lichtenstein's hartebeest</name>
    <name type="synonym">Sigmoceros lichtensteinii</name>
    <dbReference type="NCBI Taxonomy" id="59520"/>
    <lineage>
        <taxon>Eukaryota</taxon>
        <taxon>Metazoa</taxon>
        <taxon>Chordata</taxon>
        <taxon>Craniata</taxon>
        <taxon>Vertebrata</taxon>
        <taxon>Euteleostomi</taxon>
        <taxon>Mammalia</taxon>
        <taxon>Eutheria</taxon>
        <taxon>Laurasiatheria</taxon>
        <taxon>Artiodactyla</taxon>
        <taxon>Ruminantia</taxon>
        <taxon>Pecora</taxon>
        <taxon>Bovidae</taxon>
        <taxon>Alcelaphinae</taxon>
        <taxon>Alcelaphus</taxon>
    </lineage>
</organism>
<keyword id="KW-0249">Electron transport</keyword>
<keyword id="KW-0349">Heme</keyword>
<keyword id="KW-0408">Iron</keyword>
<keyword id="KW-0472">Membrane</keyword>
<keyword id="KW-0479">Metal-binding</keyword>
<keyword id="KW-0496">Mitochondrion</keyword>
<keyword id="KW-0999">Mitochondrion inner membrane</keyword>
<keyword id="KW-0679">Respiratory chain</keyword>
<keyword id="KW-0812">Transmembrane</keyword>
<keyword id="KW-1133">Transmembrane helix</keyword>
<keyword id="KW-0813">Transport</keyword>
<keyword id="KW-0830">Ubiquinone</keyword>
<evidence type="ECO:0000250" key="1"/>
<evidence type="ECO:0000250" key="2">
    <source>
        <dbReference type="UniProtKB" id="P00157"/>
    </source>
</evidence>
<evidence type="ECO:0000255" key="3">
    <source>
        <dbReference type="PROSITE-ProRule" id="PRU00967"/>
    </source>
</evidence>
<evidence type="ECO:0000255" key="4">
    <source>
        <dbReference type="PROSITE-ProRule" id="PRU00968"/>
    </source>
</evidence>
<evidence type="ECO:0000305" key="5"/>
<geneLocation type="mitochondrion"/>
<dbReference type="EMBL" id="AF016636">
    <property type="protein sequence ID" value="AAD13479.1"/>
    <property type="molecule type" value="Genomic_DNA"/>
</dbReference>
<dbReference type="EMBL" id="AF034967">
    <property type="protein sequence ID" value="AAD09168.1"/>
    <property type="molecule type" value="Genomic_DNA"/>
</dbReference>
<dbReference type="SMR" id="O99257"/>
<dbReference type="GO" id="GO:0005743">
    <property type="term" value="C:mitochondrial inner membrane"/>
    <property type="evidence" value="ECO:0007669"/>
    <property type="project" value="UniProtKB-SubCell"/>
</dbReference>
<dbReference type="GO" id="GO:0045275">
    <property type="term" value="C:respiratory chain complex III"/>
    <property type="evidence" value="ECO:0007669"/>
    <property type="project" value="InterPro"/>
</dbReference>
<dbReference type="GO" id="GO:0046872">
    <property type="term" value="F:metal ion binding"/>
    <property type="evidence" value="ECO:0007669"/>
    <property type="project" value="UniProtKB-KW"/>
</dbReference>
<dbReference type="GO" id="GO:0008121">
    <property type="term" value="F:ubiquinol-cytochrome-c reductase activity"/>
    <property type="evidence" value="ECO:0007669"/>
    <property type="project" value="InterPro"/>
</dbReference>
<dbReference type="GO" id="GO:0006122">
    <property type="term" value="P:mitochondrial electron transport, ubiquinol to cytochrome c"/>
    <property type="evidence" value="ECO:0007669"/>
    <property type="project" value="TreeGrafter"/>
</dbReference>
<dbReference type="CDD" id="cd00290">
    <property type="entry name" value="cytochrome_b_C"/>
    <property type="match status" value="1"/>
</dbReference>
<dbReference type="CDD" id="cd00284">
    <property type="entry name" value="Cytochrome_b_N"/>
    <property type="match status" value="1"/>
</dbReference>
<dbReference type="FunFam" id="1.20.810.10:FF:000002">
    <property type="entry name" value="Cytochrome b"/>
    <property type="match status" value="1"/>
</dbReference>
<dbReference type="Gene3D" id="1.20.810.10">
    <property type="entry name" value="Cytochrome Bc1 Complex, Chain C"/>
    <property type="match status" value="1"/>
</dbReference>
<dbReference type="InterPro" id="IPR005798">
    <property type="entry name" value="Cyt_b/b6_C"/>
</dbReference>
<dbReference type="InterPro" id="IPR036150">
    <property type="entry name" value="Cyt_b/b6_C_sf"/>
</dbReference>
<dbReference type="InterPro" id="IPR005797">
    <property type="entry name" value="Cyt_b/b6_N"/>
</dbReference>
<dbReference type="InterPro" id="IPR027387">
    <property type="entry name" value="Cytb/b6-like_sf"/>
</dbReference>
<dbReference type="InterPro" id="IPR030689">
    <property type="entry name" value="Cytochrome_b"/>
</dbReference>
<dbReference type="InterPro" id="IPR048260">
    <property type="entry name" value="Cytochrome_b_C_euk/bac"/>
</dbReference>
<dbReference type="InterPro" id="IPR048259">
    <property type="entry name" value="Cytochrome_b_N_euk/bac"/>
</dbReference>
<dbReference type="InterPro" id="IPR016174">
    <property type="entry name" value="Di-haem_cyt_TM"/>
</dbReference>
<dbReference type="PANTHER" id="PTHR19271">
    <property type="entry name" value="CYTOCHROME B"/>
    <property type="match status" value="1"/>
</dbReference>
<dbReference type="PANTHER" id="PTHR19271:SF16">
    <property type="entry name" value="CYTOCHROME B"/>
    <property type="match status" value="1"/>
</dbReference>
<dbReference type="Pfam" id="PF00032">
    <property type="entry name" value="Cytochrom_B_C"/>
    <property type="match status" value="1"/>
</dbReference>
<dbReference type="Pfam" id="PF00033">
    <property type="entry name" value="Cytochrome_B"/>
    <property type="match status" value="1"/>
</dbReference>
<dbReference type="PIRSF" id="PIRSF038885">
    <property type="entry name" value="COB"/>
    <property type="match status" value="1"/>
</dbReference>
<dbReference type="SUPFAM" id="SSF81648">
    <property type="entry name" value="a domain/subunit of cytochrome bc1 complex (Ubiquinol-cytochrome c reductase)"/>
    <property type="match status" value="1"/>
</dbReference>
<dbReference type="SUPFAM" id="SSF81342">
    <property type="entry name" value="Transmembrane di-heme cytochromes"/>
    <property type="match status" value="1"/>
</dbReference>
<dbReference type="PROSITE" id="PS51003">
    <property type="entry name" value="CYTB_CTER"/>
    <property type="match status" value="1"/>
</dbReference>
<dbReference type="PROSITE" id="PS51002">
    <property type="entry name" value="CYTB_NTER"/>
    <property type="match status" value="1"/>
</dbReference>
<comment type="function">
    <text evidence="2">Component of the ubiquinol-cytochrome c reductase complex (complex III or cytochrome b-c1 complex) that is part of the mitochondrial respiratory chain. The b-c1 complex mediates electron transfer from ubiquinol to cytochrome c. Contributes to the generation of a proton gradient across the mitochondrial membrane that is then used for ATP synthesis.</text>
</comment>
<comment type="cofactor">
    <cofactor evidence="2">
        <name>heme b</name>
        <dbReference type="ChEBI" id="CHEBI:60344"/>
    </cofactor>
    <text evidence="2">Binds 2 heme b groups non-covalently.</text>
</comment>
<comment type="subunit">
    <text evidence="2">The cytochrome bc1 complex contains 11 subunits: 3 respiratory subunits (MT-CYB, CYC1 and UQCRFS1), 2 core proteins (UQCRC1 and UQCRC2) and 6 low-molecular weight proteins (UQCRH/QCR6, UQCRB/QCR7, UQCRQ/QCR8, UQCR10/QCR9, UQCR11/QCR10 and a cleavage product of UQCRFS1). This cytochrome bc1 complex then forms a dimer.</text>
</comment>
<comment type="subcellular location">
    <subcellularLocation>
        <location evidence="2">Mitochondrion inner membrane</location>
        <topology evidence="2">Multi-pass membrane protein</topology>
    </subcellularLocation>
</comment>
<comment type="miscellaneous">
    <text evidence="1">Heme 1 (or BL or b562) is low-potential and absorbs at about 562 nm, and heme 2 (or BH or b566) is high-potential and absorbs at about 566 nm.</text>
</comment>
<comment type="similarity">
    <text evidence="3 4">Belongs to the cytochrome b family.</text>
</comment>
<comment type="caution">
    <text evidence="2">The full-length protein contains only eight transmembrane helices, not nine as predicted by bioinformatics tools.</text>
</comment>
<feature type="chain" id="PRO_0000060561" description="Cytochrome b">
    <location>
        <begin position="1"/>
        <end position="379"/>
    </location>
</feature>
<feature type="transmembrane region" description="Helical" evidence="2">
    <location>
        <begin position="33"/>
        <end position="53"/>
    </location>
</feature>
<feature type="transmembrane region" description="Helical" evidence="2">
    <location>
        <begin position="77"/>
        <end position="98"/>
    </location>
</feature>
<feature type="transmembrane region" description="Helical" evidence="2">
    <location>
        <begin position="113"/>
        <end position="133"/>
    </location>
</feature>
<feature type="transmembrane region" description="Helical" evidence="2">
    <location>
        <begin position="178"/>
        <end position="198"/>
    </location>
</feature>
<feature type="transmembrane region" description="Helical" evidence="2">
    <location>
        <begin position="226"/>
        <end position="246"/>
    </location>
</feature>
<feature type="transmembrane region" description="Helical" evidence="2">
    <location>
        <begin position="288"/>
        <end position="308"/>
    </location>
</feature>
<feature type="transmembrane region" description="Helical" evidence="2">
    <location>
        <begin position="320"/>
        <end position="340"/>
    </location>
</feature>
<feature type="transmembrane region" description="Helical" evidence="2">
    <location>
        <begin position="347"/>
        <end position="367"/>
    </location>
</feature>
<feature type="binding site" description="axial binding residue" evidence="2">
    <location>
        <position position="83"/>
    </location>
    <ligand>
        <name>heme b</name>
        <dbReference type="ChEBI" id="CHEBI:60344"/>
        <label>b562</label>
    </ligand>
    <ligandPart>
        <name>Fe</name>
        <dbReference type="ChEBI" id="CHEBI:18248"/>
    </ligandPart>
</feature>
<feature type="binding site" description="axial binding residue" evidence="2">
    <location>
        <position position="97"/>
    </location>
    <ligand>
        <name>heme b</name>
        <dbReference type="ChEBI" id="CHEBI:60344"/>
        <label>b566</label>
    </ligand>
    <ligandPart>
        <name>Fe</name>
        <dbReference type="ChEBI" id="CHEBI:18248"/>
    </ligandPart>
</feature>
<feature type="binding site" description="axial binding residue" evidence="2">
    <location>
        <position position="182"/>
    </location>
    <ligand>
        <name>heme b</name>
        <dbReference type="ChEBI" id="CHEBI:60344"/>
        <label>b562</label>
    </ligand>
    <ligandPart>
        <name>Fe</name>
        <dbReference type="ChEBI" id="CHEBI:18248"/>
    </ligandPart>
</feature>
<feature type="binding site" description="axial binding residue" evidence="2">
    <location>
        <position position="196"/>
    </location>
    <ligand>
        <name>heme b</name>
        <dbReference type="ChEBI" id="CHEBI:60344"/>
        <label>b566</label>
    </ligand>
    <ligandPart>
        <name>Fe</name>
        <dbReference type="ChEBI" id="CHEBI:18248"/>
    </ligandPart>
</feature>
<feature type="binding site" evidence="2">
    <location>
        <position position="201"/>
    </location>
    <ligand>
        <name>a ubiquinone</name>
        <dbReference type="ChEBI" id="CHEBI:16389"/>
    </ligand>
</feature>
<feature type="sequence conflict" description="In Ref. 2; AAD09168." evidence="5" ref="2">
    <original>E</original>
    <variation>K</variation>
    <location>
        <position position="12"/>
    </location>
</feature>
<feature type="sequence conflict" description="In Ref. 2; AAD09168." evidence="5" ref="2">
    <original>F</original>
    <variation>L</variation>
    <location>
        <position position="168"/>
    </location>
</feature>
<feature type="sequence conflict" description="In Ref. 2; AAD09168." evidence="5" ref="2">
    <original>L</original>
    <variation>S</variation>
    <location>
        <position position="212"/>
    </location>
</feature>
<feature type="sequence conflict" description="In Ref. 2; AAD09168." evidence="5" ref="2">
    <original>W</original>
    <variation>S</variation>
    <location>
        <position position="283"/>
    </location>
</feature>
<feature type="sequence conflict" description="In Ref. 2; AAD09168." evidence="5" ref="2">
    <original>G</original>
    <variation>K</variation>
    <location>
        <position position="287"/>
    </location>
</feature>
<feature type="sequence conflict" description="In Ref. 2; AAD09168." evidence="5" ref="2">
    <original>L</original>
    <variation>I</variation>
    <location>
        <position position="356"/>
    </location>
</feature>
<name>CYB_ALCLI</name>
<sequence length="379" mass="42675">MTNIRKTHPLMEIINNAFIDLPAPSNISSWWNFGSLLGICLILQILTGLFLAMHYTSDTMTAFSSVTHICRDVNYGWIIRYMHANGASMFFICLFLHVGRGLYYGSYAFLETWNVGVILLFATMATAFMGYVLPWGQMSFWGATVITNLLSAIPYIGTDLVEWIWGGFSVDKATLTRFFAFHFILPFIIAALAMVHLLFLHETGSNNPTGILSDADKIPFHPYYTIKDILGALLLILALMLLVLFAPDLLGDPDNYTPANPLNTPPHIKPEWYFLFAYAILRWIPNGLGGVLALALSILILVLVPLLHTSKQRSMMFRPISQCMFWILVADLLTLTWIGGQPVEHPYIIIGQLASLMYFLLILVLMPMASTIENNLLKW</sequence>
<proteinExistence type="inferred from homology"/>
<protein>
    <recommendedName>
        <fullName>Cytochrome b</fullName>
    </recommendedName>
    <alternativeName>
        <fullName>Complex III subunit 3</fullName>
    </alternativeName>
    <alternativeName>
        <fullName>Complex III subunit III</fullName>
    </alternativeName>
    <alternativeName>
        <fullName>Cytochrome b-c1 complex subunit 3</fullName>
    </alternativeName>
    <alternativeName>
        <fullName>Ubiquinol-cytochrome-c reductase complex cytochrome b subunit</fullName>
    </alternativeName>
</protein>